<name>Y2383_VIBCH</name>
<dbReference type="EMBL" id="X61384">
    <property type="protein sequence ID" value="CAA43657.1"/>
    <property type="status" value="ALT_FRAME"/>
    <property type="molecule type" value="Genomic_DNA"/>
</dbReference>
<dbReference type="EMBL" id="AE003852">
    <property type="protein sequence ID" value="AAF95526.1"/>
    <property type="molecule type" value="Genomic_DNA"/>
</dbReference>
<dbReference type="PIR" id="F82082">
    <property type="entry name" value="F82082"/>
</dbReference>
<dbReference type="RefSeq" id="NP_232013.1">
    <property type="nucleotide sequence ID" value="NC_002505.1"/>
</dbReference>
<dbReference type="RefSeq" id="WP_000923496.1">
    <property type="nucleotide sequence ID" value="NZ_LT906614.1"/>
</dbReference>
<dbReference type="SMR" id="Q9KPI4"/>
<dbReference type="STRING" id="243277.VC_2383"/>
<dbReference type="DNASU" id="2613052"/>
<dbReference type="EnsemblBacteria" id="AAF95526">
    <property type="protein sequence ID" value="AAF95526"/>
    <property type="gene ID" value="VC_2383"/>
</dbReference>
<dbReference type="KEGG" id="vch:VC_2383"/>
<dbReference type="PATRIC" id="fig|243277.26.peg.2269"/>
<dbReference type="eggNOG" id="COG0583">
    <property type="taxonomic scope" value="Bacteria"/>
</dbReference>
<dbReference type="HOGENOM" id="CLU_077403_0_0_6"/>
<dbReference type="Proteomes" id="UP000000584">
    <property type="component" value="Chromosome 1"/>
</dbReference>
<dbReference type="GO" id="GO:0003700">
    <property type="term" value="F:DNA-binding transcription factor activity"/>
    <property type="evidence" value="ECO:0007669"/>
    <property type="project" value="InterPro"/>
</dbReference>
<dbReference type="GO" id="GO:0000976">
    <property type="term" value="F:transcription cis-regulatory region binding"/>
    <property type="evidence" value="ECO:0000318"/>
    <property type="project" value="GO_Central"/>
</dbReference>
<dbReference type="GO" id="GO:0006355">
    <property type="term" value="P:regulation of DNA-templated transcription"/>
    <property type="evidence" value="ECO:0000318"/>
    <property type="project" value="GO_Central"/>
</dbReference>
<dbReference type="CDD" id="cd05466">
    <property type="entry name" value="PBP2_LTTR_substrate"/>
    <property type="match status" value="1"/>
</dbReference>
<dbReference type="Gene3D" id="3.40.190.290">
    <property type="match status" value="1"/>
</dbReference>
<dbReference type="Gene3D" id="1.10.10.10">
    <property type="entry name" value="Winged helix-like DNA-binding domain superfamily/Winged helix DNA-binding domain"/>
    <property type="match status" value="1"/>
</dbReference>
<dbReference type="InterPro" id="IPR005119">
    <property type="entry name" value="LysR_subst-bd"/>
</dbReference>
<dbReference type="InterPro" id="IPR000847">
    <property type="entry name" value="Tscrpt_reg_HTH_LysR"/>
</dbReference>
<dbReference type="InterPro" id="IPR036388">
    <property type="entry name" value="WH-like_DNA-bd_sf"/>
</dbReference>
<dbReference type="InterPro" id="IPR036390">
    <property type="entry name" value="WH_DNA-bd_sf"/>
</dbReference>
<dbReference type="PANTHER" id="PTHR30126">
    <property type="entry name" value="HTH-TYPE TRANSCRIPTIONAL REGULATOR"/>
    <property type="match status" value="1"/>
</dbReference>
<dbReference type="PANTHER" id="PTHR30126:SF94">
    <property type="entry name" value="LYSR FAMILY TRANSCRIPTIONAL REGULATOR"/>
    <property type="match status" value="1"/>
</dbReference>
<dbReference type="Pfam" id="PF00126">
    <property type="entry name" value="HTH_1"/>
    <property type="match status" value="1"/>
</dbReference>
<dbReference type="Pfam" id="PF03466">
    <property type="entry name" value="LysR_substrate"/>
    <property type="match status" value="1"/>
</dbReference>
<dbReference type="SUPFAM" id="SSF53850">
    <property type="entry name" value="Periplasmic binding protein-like II"/>
    <property type="match status" value="1"/>
</dbReference>
<dbReference type="SUPFAM" id="SSF46785">
    <property type="entry name" value="Winged helix' DNA-binding domain"/>
    <property type="match status" value="1"/>
</dbReference>
<dbReference type="PROSITE" id="PS50931">
    <property type="entry name" value="HTH_LYSR"/>
    <property type="match status" value="1"/>
</dbReference>
<keyword id="KW-0238">DNA-binding</keyword>
<keyword id="KW-1185">Reference proteome</keyword>
<keyword id="KW-0804">Transcription</keyword>
<keyword id="KW-0805">Transcription regulation</keyword>
<gene>
    <name type="ordered locus">VC_2383</name>
</gene>
<proteinExistence type="inferred from homology"/>
<accession>Q9KPI4</accession>
<accession>P24544</accession>
<organism>
    <name type="scientific">Vibrio cholerae serotype O1 (strain ATCC 39315 / El Tor Inaba N16961)</name>
    <dbReference type="NCBI Taxonomy" id="243277"/>
    <lineage>
        <taxon>Bacteria</taxon>
        <taxon>Pseudomonadati</taxon>
        <taxon>Pseudomonadota</taxon>
        <taxon>Gammaproteobacteria</taxon>
        <taxon>Vibrionales</taxon>
        <taxon>Vibrionaceae</taxon>
        <taxon>Vibrio</taxon>
    </lineage>
</organism>
<sequence length="286" mass="31211">MLLEGIETLLVLSKEKTMSRTGSQLYISQSAVSKRIANLEKKLGKKLIVPAGRHIKLTADAEQLIASIGPTFNELHGLIFEQQTLEDNTLLRMDCSETLVAGYLGQTMGQHRKQDPHWVITTNHTPRIVENVQSGKATLGFCAGYLPANHGLLTFHLGDEPFTVISQAPLHALPSELITNDLANPANTYQAAMLHKQGIRPAMEMDSYTAAAQLALGGMLPALVPRSIVSTLKIEPQHCFDFAELADLTRPIHICLRASRYRSSRVQALITALHDAVPKAVLAPSA</sequence>
<feature type="chain" id="PRO_0000105828" description="Uncharacterized HTH-type transcriptional regulator VC_2383">
    <location>
        <begin position="1"/>
        <end position="286"/>
    </location>
</feature>
<feature type="domain" description="HTH lysR-type" evidence="1">
    <location>
        <begin position="1"/>
        <end position="58"/>
    </location>
</feature>
<feature type="DNA-binding region" description="H-T-H motif" evidence="1">
    <location>
        <begin position="18"/>
        <end position="37"/>
    </location>
</feature>
<protein>
    <recommendedName>
        <fullName>Uncharacterized HTH-type transcriptional regulator VC_2383</fullName>
    </recommendedName>
</protein>
<comment type="similarity">
    <text evidence="2">Belongs to the LysR transcriptional regulatory family.</text>
</comment>
<comment type="caution">
    <text evidence="3">Was originally thought to be recA; but the sequence was incorrectly assigned.</text>
</comment>
<comment type="sequence caution" evidence="2">
    <conflict type="frameshift">
        <sequence resource="EMBL-CDS" id="CAA43657"/>
    </conflict>
</comment>
<reference key="1">
    <citation type="journal article" date="1992" name="Nucleic Acids Res.">
        <title>Nucleotide and deduced amino acid sequence of the recA gene of Vibrio cholerae.</title>
        <authorList>
            <person name="Ghosh S.K."/>
            <person name="Biswas S.K."/>
            <person name="Paul K."/>
            <person name="Das J."/>
        </authorList>
    </citation>
    <scope>PRELIMINARY NUCLEOTIDE SEQUENCE [GENOMIC DNA]</scope>
    <source>
        <strain>ATCC 25870 / Classical Inaba 569B / Serotype O1</strain>
    </source>
</reference>
<reference key="2">
    <citation type="journal article" date="2000" name="Nature">
        <title>DNA sequence of both chromosomes of the cholera pathogen Vibrio cholerae.</title>
        <authorList>
            <person name="Heidelberg J.F."/>
            <person name="Eisen J.A."/>
            <person name="Nelson W.C."/>
            <person name="Clayton R.A."/>
            <person name="Gwinn M.L."/>
            <person name="Dodson R.J."/>
            <person name="Haft D.H."/>
            <person name="Hickey E.K."/>
            <person name="Peterson J.D."/>
            <person name="Umayam L.A."/>
            <person name="Gill S.R."/>
            <person name="Nelson K.E."/>
            <person name="Read T.D."/>
            <person name="Tettelin H."/>
            <person name="Richardson D.L."/>
            <person name="Ermolaeva M.D."/>
            <person name="Vamathevan J.J."/>
            <person name="Bass S."/>
            <person name="Qin H."/>
            <person name="Dragoi I."/>
            <person name="Sellers P."/>
            <person name="McDonald L.A."/>
            <person name="Utterback T.R."/>
            <person name="Fleischmann R.D."/>
            <person name="Nierman W.C."/>
            <person name="White O."/>
            <person name="Salzberg S.L."/>
            <person name="Smith H.O."/>
            <person name="Colwell R.R."/>
            <person name="Mekalanos J.J."/>
            <person name="Venter J.C."/>
            <person name="Fraser C.M."/>
        </authorList>
    </citation>
    <scope>NUCLEOTIDE SEQUENCE [LARGE SCALE GENOMIC DNA]</scope>
    <source>
        <strain>ATCC 39315 / El Tor Inaba N16961</strain>
    </source>
</reference>
<evidence type="ECO:0000255" key="1">
    <source>
        <dbReference type="PROSITE-ProRule" id="PRU00253"/>
    </source>
</evidence>
<evidence type="ECO:0000305" key="2"/>
<evidence type="ECO:0000305" key="3">
    <source>
    </source>
</evidence>